<sequence length="157" mass="18189">MPTWHYSYKLRDESRIAKAVQFDIPVSIKDMREAVAAIRGKKVSEAKKLLENVIALREPIPFKRYKGKLSHKRGLPAKWKWPIGRYPVKAAKYLLRLLEHVEANADNKGLDKDKLVIVHIAAHKGMTLKRWMPRAFGRATPKFRRTSHVEIVVKEVD</sequence>
<feature type="chain" id="PRO_1000052659" description="Large ribosomal subunit protein uL22">
    <location>
        <begin position="1"/>
        <end position="157"/>
    </location>
</feature>
<organism>
    <name type="scientific">Staphylothermus marinus (strain ATCC 43588 / DSM 3639 / JCM 9404 / F1)</name>
    <dbReference type="NCBI Taxonomy" id="399550"/>
    <lineage>
        <taxon>Archaea</taxon>
        <taxon>Thermoproteota</taxon>
        <taxon>Thermoprotei</taxon>
        <taxon>Desulfurococcales</taxon>
        <taxon>Desulfurococcaceae</taxon>
        <taxon>Staphylothermus</taxon>
    </lineage>
</organism>
<dbReference type="EMBL" id="CP000575">
    <property type="protein sequence ID" value="ABN70122.1"/>
    <property type="molecule type" value="Genomic_DNA"/>
</dbReference>
<dbReference type="RefSeq" id="WP_011839313.1">
    <property type="nucleotide sequence ID" value="NC_009033.1"/>
</dbReference>
<dbReference type="SMR" id="A3DNB2"/>
<dbReference type="STRING" id="399550.Smar_1024"/>
<dbReference type="GeneID" id="4906584"/>
<dbReference type="KEGG" id="smr:Smar_1024"/>
<dbReference type="eggNOG" id="arCOG04098">
    <property type="taxonomic scope" value="Archaea"/>
</dbReference>
<dbReference type="HOGENOM" id="CLU_083987_0_2_2"/>
<dbReference type="OrthoDB" id="314984at2157"/>
<dbReference type="Proteomes" id="UP000000254">
    <property type="component" value="Chromosome"/>
</dbReference>
<dbReference type="GO" id="GO:0022625">
    <property type="term" value="C:cytosolic large ribosomal subunit"/>
    <property type="evidence" value="ECO:0007669"/>
    <property type="project" value="TreeGrafter"/>
</dbReference>
<dbReference type="GO" id="GO:0019843">
    <property type="term" value="F:rRNA binding"/>
    <property type="evidence" value="ECO:0007669"/>
    <property type="project" value="UniProtKB-UniRule"/>
</dbReference>
<dbReference type="GO" id="GO:0003735">
    <property type="term" value="F:structural constituent of ribosome"/>
    <property type="evidence" value="ECO:0007669"/>
    <property type="project" value="InterPro"/>
</dbReference>
<dbReference type="GO" id="GO:0002181">
    <property type="term" value="P:cytoplasmic translation"/>
    <property type="evidence" value="ECO:0007669"/>
    <property type="project" value="TreeGrafter"/>
</dbReference>
<dbReference type="CDD" id="cd00336">
    <property type="entry name" value="Ribosomal_L22"/>
    <property type="match status" value="1"/>
</dbReference>
<dbReference type="Gene3D" id="3.90.470.10">
    <property type="entry name" value="Ribosomal protein L22/L17"/>
    <property type="match status" value="1"/>
</dbReference>
<dbReference type="HAMAP" id="MF_01331_A">
    <property type="entry name" value="Ribosomal_uL22_A"/>
    <property type="match status" value="1"/>
</dbReference>
<dbReference type="InterPro" id="IPR001063">
    <property type="entry name" value="Ribosomal_uL22"/>
</dbReference>
<dbReference type="InterPro" id="IPR018260">
    <property type="entry name" value="Ribosomal_uL22_CS"/>
</dbReference>
<dbReference type="InterPro" id="IPR005721">
    <property type="entry name" value="Ribosomal_uL22_euk/arc"/>
</dbReference>
<dbReference type="InterPro" id="IPR036394">
    <property type="entry name" value="Ribosomal_uL22_sf"/>
</dbReference>
<dbReference type="NCBIfam" id="NF003260">
    <property type="entry name" value="PRK04223.1"/>
    <property type="match status" value="1"/>
</dbReference>
<dbReference type="NCBIfam" id="TIGR01038">
    <property type="entry name" value="uL22_arch_euk"/>
    <property type="match status" value="1"/>
</dbReference>
<dbReference type="PANTHER" id="PTHR11593">
    <property type="entry name" value="60S RIBOSOMAL PROTEIN L17"/>
    <property type="match status" value="1"/>
</dbReference>
<dbReference type="PANTHER" id="PTHR11593:SF10">
    <property type="entry name" value="60S RIBOSOMAL PROTEIN L17"/>
    <property type="match status" value="1"/>
</dbReference>
<dbReference type="Pfam" id="PF00237">
    <property type="entry name" value="Ribosomal_L22"/>
    <property type="match status" value="1"/>
</dbReference>
<dbReference type="SUPFAM" id="SSF54843">
    <property type="entry name" value="Ribosomal protein L22"/>
    <property type="match status" value="1"/>
</dbReference>
<dbReference type="PROSITE" id="PS00464">
    <property type="entry name" value="RIBOSOMAL_L22"/>
    <property type="match status" value="1"/>
</dbReference>
<reference key="1">
    <citation type="journal article" date="2009" name="BMC Genomics">
        <title>The complete genome sequence of Staphylothermus marinus reveals differences in sulfur metabolism among heterotrophic Crenarchaeota.</title>
        <authorList>
            <person name="Anderson I.J."/>
            <person name="Dharmarajan L."/>
            <person name="Rodriguez J."/>
            <person name="Hooper S."/>
            <person name="Porat I."/>
            <person name="Ulrich L.E."/>
            <person name="Elkins J.G."/>
            <person name="Mavromatis K."/>
            <person name="Sun H."/>
            <person name="Land M."/>
            <person name="Lapidus A."/>
            <person name="Lucas S."/>
            <person name="Barry K."/>
            <person name="Huber H."/>
            <person name="Zhulin I.B."/>
            <person name="Whitman W.B."/>
            <person name="Mukhopadhyay B."/>
            <person name="Woese C."/>
            <person name="Bristow J."/>
            <person name="Kyrpides N."/>
        </authorList>
    </citation>
    <scope>NUCLEOTIDE SEQUENCE [LARGE SCALE GENOMIC DNA]</scope>
    <source>
        <strain>ATCC 43588 / DSM 3639 / JCM 9404 / F1</strain>
    </source>
</reference>
<reference key="2">
    <citation type="journal article" date="2009" name="Stand. Genomic Sci.">
        <title>Complete genome sequence of Staphylothermus marinus Stetter and Fiala 1986 type strain F1.</title>
        <authorList>
            <person name="Anderson I.J."/>
            <person name="Sun H."/>
            <person name="Lapidus A."/>
            <person name="Copeland A."/>
            <person name="Glavina Del Rio T."/>
            <person name="Tice H."/>
            <person name="Dalin E."/>
            <person name="Lucas S."/>
            <person name="Barry K."/>
            <person name="Land M."/>
            <person name="Richardson P."/>
            <person name="Huber H."/>
            <person name="Kyrpides N.C."/>
        </authorList>
    </citation>
    <scope>NUCLEOTIDE SEQUENCE [LARGE SCALE GENOMIC DNA]</scope>
    <source>
        <strain>ATCC 43588 / DSM 3639 / JCM 9404 / F1</strain>
    </source>
</reference>
<accession>A3DNB2</accession>
<evidence type="ECO:0000255" key="1">
    <source>
        <dbReference type="HAMAP-Rule" id="MF_01331"/>
    </source>
</evidence>
<evidence type="ECO:0000305" key="2"/>
<protein>
    <recommendedName>
        <fullName evidence="1">Large ribosomal subunit protein uL22</fullName>
    </recommendedName>
    <alternativeName>
        <fullName evidence="2">50S ribosomal protein L22</fullName>
    </alternativeName>
</protein>
<comment type="function">
    <text evidence="1">This protein binds specifically to 23S rRNA. It makes multiple contacts with different domains of the 23S rRNA in the assembled 50S subunit and ribosome.</text>
</comment>
<comment type="function">
    <text evidence="1">The globular domain of the protein is located near the polypeptide exit tunnel on the outside of the subunit, while an extended beta-hairpin is found that lines the wall of the exit tunnel in the center of the 70S ribosome.</text>
</comment>
<comment type="subunit">
    <text evidence="1">Part of the 50S ribosomal subunit.</text>
</comment>
<comment type="similarity">
    <text evidence="1">Belongs to the universal ribosomal protein uL22 family.</text>
</comment>
<name>RL22_STAMF</name>
<gene>
    <name evidence="1" type="primary">rpl22</name>
    <name type="ordered locus">Smar_1024</name>
</gene>
<proteinExistence type="inferred from homology"/>
<keyword id="KW-1185">Reference proteome</keyword>
<keyword id="KW-0687">Ribonucleoprotein</keyword>
<keyword id="KW-0689">Ribosomal protein</keyword>
<keyword id="KW-0694">RNA-binding</keyword>
<keyword id="KW-0699">rRNA-binding</keyword>